<name>RF1_MESH7</name>
<sequence length="361" mass="40843">MEKKMFNSLMKIHQKYQDLKQLLETDQILNDQKQYLQIAKEIASITEIIEVFQKFLDDQKVLEDAKTILIQEDDPELIQLAKVEIATMSKNIEEYEKKLLILMLPKDKNDEKDVIVEIRGAAGGDEANIFVGDLFKMYHKWADSQKAKVKVLSSSLALAGGFSQIIFQISGQKIYSKLKFESGVHRVQRVPATETMGRIHTSTATVTVMPKIDEKIEIEINPSDLKIDTYRSSGAGGQSVNTTDSAVRITHIPTGIVVTSQDERSQIGNKEIAMGILKSKIYNLELQKQQQKQSDFRKLAGSGARSEKIRTYNYPQDRLTDHRINFSTSLKPIIQGSLNPIIEALLAQEKTELILQNYANK</sequence>
<reference key="1">
    <citation type="journal article" date="2005" name="J. Bacteriol.">
        <title>Swine and poultry pathogens: the complete genome sequences of two strains of Mycoplasma hyopneumoniae and a strain of Mycoplasma synoviae.</title>
        <authorList>
            <person name="Vasconcelos A.T.R."/>
            <person name="Ferreira H.B."/>
            <person name="Bizarro C.V."/>
            <person name="Bonatto S.L."/>
            <person name="Carvalho M.O."/>
            <person name="Pinto P.M."/>
            <person name="Almeida D.F."/>
            <person name="Almeida L.G.P."/>
            <person name="Almeida R."/>
            <person name="Alves-Junior L."/>
            <person name="Assuncao E.N."/>
            <person name="Azevedo V.A.C."/>
            <person name="Bogo M.R."/>
            <person name="Brigido M.M."/>
            <person name="Brocchi M."/>
            <person name="Burity H.A."/>
            <person name="Camargo A.A."/>
            <person name="Camargo S.S."/>
            <person name="Carepo M.S."/>
            <person name="Carraro D.M."/>
            <person name="de Mattos Cascardo J.C."/>
            <person name="Castro L.A."/>
            <person name="Cavalcanti G."/>
            <person name="Chemale G."/>
            <person name="Collevatti R.G."/>
            <person name="Cunha C.W."/>
            <person name="Dallagiovanna B."/>
            <person name="Dambros B.P."/>
            <person name="Dellagostin O.A."/>
            <person name="Falcao C."/>
            <person name="Fantinatti-Garboggini F."/>
            <person name="Felipe M.S.S."/>
            <person name="Fiorentin L."/>
            <person name="Franco G.R."/>
            <person name="Freitas N.S.A."/>
            <person name="Frias D."/>
            <person name="Grangeiro T.B."/>
            <person name="Grisard E.C."/>
            <person name="Guimaraes C.T."/>
            <person name="Hungria M."/>
            <person name="Jardim S.N."/>
            <person name="Krieger M.A."/>
            <person name="Laurino J.P."/>
            <person name="Lima L.F.A."/>
            <person name="Lopes M.I."/>
            <person name="Loreto E.L.S."/>
            <person name="Madeira H.M.F."/>
            <person name="Manfio G.P."/>
            <person name="Maranhao A.Q."/>
            <person name="Martinkovics C.T."/>
            <person name="Medeiros S.R.B."/>
            <person name="Moreira M.A.M."/>
            <person name="Neiva M."/>
            <person name="Ramalho-Neto C.E."/>
            <person name="Nicolas M.F."/>
            <person name="Oliveira S.C."/>
            <person name="Paixao R.F.C."/>
            <person name="Pedrosa F.O."/>
            <person name="Pena S.D.J."/>
            <person name="Pereira M."/>
            <person name="Pereira-Ferrari L."/>
            <person name="Piffer I."/>
            <person name="Pinto L.S."/>
            <person name="Potrich D.P."/>
            <person name="Salim A.C.M."/>
            <person name="Santos F.R."/>
            <person name="Schmitt R."/>
            <person name="Schneider M.P.C."/>
            <person name="Schrank A."/>
            <person name="Schrank I.S."/>
            <person name="Schuck A.F."/>
            <person name="Seuanez H.N."/>
            <person name="Silva D.W."/>
            <person name="Silva R."/>
            <person name="Silva S.C."/>
            <person name="Soares C.M.A."/>
            <person name="Souza K.R.L."/>
            <person name="Souza R.C."/>
            <person name="Staats C.C."/>
            <person name="Steffens M.B.R."/>
            <person name="Teixeira S.M.R."/>
            <person name="Urmenyi T.P."/>
            <person name="Vainstein M.H."/>
            <person name="Zuccherato L.W."/>
            <person name="Simpson A.J.G."/>
            <person name="Zaha A."/>
        </authorList>
    </citation>
    <scope>NUCLEOTIDE SEQUENCE [LARGE SCALE GENOMIC DNA]</scope>
    <source>
        <strain>7448</strain>
    </source>
</reference>
<gene>
    <name evidence="1" type="primary">prfA</name>
    <name type="ordered locus">MHP7448_0139</name>
</gene>
<feature type="chain" id="PRO_0000263299" description="Peptide chain release factor 1">
    <location>
        <begin position="1"/>
        <end position="361"/>
    </location>
</feature>
<feature type="modified residue" description="N5-methylglutamine" evidence="1">
    <location>
        <position position="238"/>
    </location>
</feature>
<proteinExistence type="inferred from homology"/>
<protein>
    <recommendedName>
        <fullName evidence="1">Peptide chain release factor 1</fullName>
        <shortName evidence="1">RF-1</shortName>
    </recommendedName>
</protein>
<evidence type="ECO:0000255" key="1">
    <source>
        <dbReference type="HAMAP-Rule" id="MF_00093"/>
    </source>
</evidence>
<comment type="function">
    <text evidence="1">Peptide chain release factor 1 directs the termination of translation in response to the peptide chain termination codons UAG and UAA.</text>
</comment>
<comment type="subcellular location">
    <subcellularLocation>
        <location evidence="1">Cytoplasm</location>
    </subcellularLocation>
</comment>
<comment type="PTM">
    <text evidence="1">Methylated by PrmC. Methylation increases the termination efficiency of RF1.</text>
</comment>
<comment type="similarity">
    <text evidence="1">Belongs to the prokaryotic/mitochondrial release factor family.</text>
</comment>
<organism>
    <name type="scientific">Mesomycoplasma hyopneumoniae (strain 7448)</name>
    <name type="common">Mycoplasma hyopneumoniae</name>
    <dbReference type="NCBI Taxonomy" id="262722"/>
    <lineage>
        <taxon>Bacteria</taxon>
        <taxon>Bacillati</taxon>
        <taxon>Mycoplasmatota</taxon>
        <taxon>Mycoplasmoidales</taxon>
        <taxon>Metamycoplasmataceae</taxon>
        <taxon>Mesomycoplasma</taxon>
    </lineage>
</organism>
<keyword id="KW-0963">Cytoplasm</keyword>
<keyword id="KW-0488">Methylation</keyword>
<keyword id="KW-0648">Protein biosynthesis</keyword>
<accession>Q4A8M6</accession>
<dbReference type="EMBL" id="AE017244">
    <property type="protein sequence ID" value="AAZ53513.1"/>
    <property type="molecule type" value="Genomic_DNA"/>
</dbReference>
<dbReference type="RefSeq" id="WP_011290034.1">
    <property type="nucleotide sequence ID" value="NC_007332.1"/>
</dbReference>
<dbReference type="SMR" id="Q4A8M6"/>
<dbReference type="KEGG" id="mhp:MHP7448_0139"/>
<dbReference type="HOGENOM" id="CLU_036856_0_1_14"/>
<dbReference type="Proteomes" id="UP000000553">
    <property type="component" value="Chromosome"/>
</dbReference>
<dbReference type="GO" id="GO:0005737">
    <property type="term" value="C:cytoplasm"/>
    <property type="evidence" value="ECO:0007669"/>
    <property type="project" value="UniProtKB-SubCell"/>
</dbReference>
<dbReference type="GO" id="GO:0016149">
    <property type="term" value="F:translation release factor activity, codon specific"/>
    <property type="evidence" value="ECO:0007669"/>
    <property type="project" value="UniProtKB-UniRule"/>
</dbReference>
<dbReference type="FunFam" id="3.30.160.20:FF:000004">
    <property type="entry name" value="Peptide chain release factor 1"/>
    <property type="match status" value="1"/>
</dbReference>
<dbReference type="FunFam" id="3.30.70.1660:FF:000002">
    <property type="entry name" value="Peptide chain release factor 1"/>
    <property type="match status" value="1"/>
</dbReference>
<dbReference type="Gene3D" id="3.30.160.20">
    <property type="match status" value="1"/>
</dbReference>
<dbReference type="Gene3D" id="3.30.70.1660">
    <property type="match status" value="1"/>
</dbReference>
<dbReference type="Gene3D" id="6.10.140.1950">
    <property type="match status" value="1"/>
</dbReference>
<dbReference type="HAMAP" id="MF_00093">
    <property type="entry name" value="Rel_fac_1"/>
    <property type="match status" value="1"/>
</dbReference>
<dbReference type="InterPro" id="IPR005139">
    <property type="entry name" value="PCRF"/>
</dbReference>
<dbReference type="InterPro" id="IPR000352">
    <property type="entry name" value="Pep_chain_release_fac_I"/>
</dbReference>
<dbReference type="InterPro" id="IPR045853">
    <property type="entry name" value="Pep_chain_release_fac_I_sf"/>
</dbReference>
<dbReference type="InterPro" id="IPR050057">
    <property type="entry name" value="Prokaryotic/Mito_RF"/>
</dbReference>
<dbReference type="InterPro" id="IPR004373">
    <property type="entry name" value="RF-1"/>
</dbReference>
<dbReference type="NCBIfam" id="TIGR00019">
    <property type="entry name" value="prfA"/>
    <property type="match status" value="1"/>
</dbReference>
<dbReference type="NCBIfam" id="NF001859">
    <property type="entry name" value="PRK00591.1"/>
    <property type="match status" value="1"/>
</dbReference>
<dbReference type="PANTHER" id="PTHR43804">
    <property type="entry name" value="LD18447P"/>
    <property type="match status" value="1"/>
</dbReference>
<dbReference type="PANTHER" id="PTHR43804:SF7">
    <property type="entry name" value="LD18447P"/>
    <property type="match status" value="1"/>
</dbReference>
<dbReference type="Pfam" id="PF03462">
    <property type="entry name" value="PCRF"/>
    <property type="match status" value="1"/>
</dbReference>
<dbReference type="Pfam" id="PF00472">
    <property type="entry name" value="RF-1"/>
    <property type="match status" value="1"/>
</dbReference>
<dbReference type="SMART" id="SM00937">
    <property type="entry name" value="PCRF"/>
    <property type="match status" value="1"/>
</dbReference>
<dbReference type="SUPFAM" id="SSF75620">
    <property type="entry name" value="Release factor"/>
    <property type="match status" value="1"/>
</dbReference>
<dbReference type="PROSITE" id="PS00745">
    <property type="entry name" value="RF_PROK_I"/>
    <property type="match status" value="1"/>
</dbReference>